<gene>
    <name evidence="6" type="primary">tmoF</name>
</gene>
<organism>
    <name type="scientific">Ectopseudomonas mendocina</name>
    <name type="common">Pseudomonas mendocina</name>
    <dbReference type="NCBI Taxonomy" id="300"/>
    <lineage>
        <taxon>Bacteria</taxon>
        <taxon>Pseudomonadati</taxon>
        <taxon>Pseudomonadota</taxon>
        <taxon>Gammaproteobacteria</taxon>
        <taxon>Pseudomonadales</taxon>
        <taxon>Pseudomonadaceae</taxon>
        <taxon>Ectopseudomonas</taxon>
    </lineage>
</organism>
<accession>Q03304</accession>
<accession>Q6Q8Q2</accession>
<reference key="1">
    <citation type="journal article" date="1992" name="J. Bacteriol.">
        <title>Identification of a new gene, tmoF, in the Pseudomonas mendocina KR1 gene cluster encoding toluene-4-monooxygenase.</title>
        <authorList>
            <person name="Yen K.-M."/>
            <person name="Karl M.R."/>
        </authorList>
    </citation>
    <scope>NUCLEOTIDE SEQUENCE [GENOMIC DNA]</scope>
    <scope>PROTEIN SEQUENCE OF 1-14</scope>
    <scope>FUNCTION</scope>
    <source>
        <strain>KR1</strain>
    </source>
</reference>
<reference key="2">
    <citation type="journal article" date="2004" name="Appl. Environ. Microbiol.">
        <title>Oxidation of benzene to phenol, catechol, and 1,2,3-trihydroxybenzene by toluene 4-monooxygenase of Pseudomonas mendocina KR1 and toluene 3-monooxygenase of Ralstonia pickettii PKO1.</title>
        <authorList>
            <person name="Tao Y."/>
            <person name="Fishman A."/>
            <person name="Bentley W.E."/>
            <person name="Wood T.K."/>
        </authorList>
    </citation>
    <scope>NUCLEOTIDE SEQUENCE [GENOMIC DNA]</scope>
    <scope>FUNCTION</scope>
    <scope>PATHWAY</scope>
    <source>
        <strain evidence="11">KR1</strain>
    </source>
</reference>
<reference key="3">
    <citation type="journal article" date="2008" name="Protein Expr. Purif.">
        <title>Soluble expression and purification of the oxidoreductase component of toluene 4-monooxygenase.</title>
        <authorList>
            <person name="Bailey L.J."/>
            <person name="Elsen N.L."/>
            <person name="Pierce B.S."/>
            <person name="Fox B.G."/>
        </authorList>
    </citation>
    <scope>FUNCTION</scope>
    <scope>CATALYTIC ACTIVITY</scope>
    <scope>COFACTOR</scope>
</reference>
<reference key="4">
    <citation type="journal article" date="2015" name="Biochemistry">
        <title>Structure of T4moF, the toluene 4-monooxygenase ferredoxin oxidoreductase.</title>
        <authorList>
            <person name="Acheson J.F."/>
            <person name="Moseson H."/>
            <person name="Fox B.G."/>
        </authorList>
    </citation>
    <scope>X-RAY CRYSTALLOGRAPHY (1.62 ANGSTROMS) OF 2-326 IN COMPLEX WITH FAD AND IRON-SULFUR (2FE-2S)</scope>
    <scope>COFACTOR</scope>
    <scope>SUBUNIT</scope>
</reference>
<protein>
    <recommendedName>
        <fullName evidence="6">Toluene-4-monooxygenase system, ferredoxin--NAD(+) reductase component</fullName>
        <shortName evidence="6">T4MO</shortName>
        <ecNumber evidence="4">1.18.1.3</ecNumber>
    </recommendedName>
    <alternativeName>
        <fullName evidence="8">Ferredoxin--NAD(+) reductase</fullName>
    </alternativeName>
    <alternativeName>
        <fullName evidence="7">Toluene-4-monooxygenase systme, electron transfer component</fullName>
    </alternativeName>
</protein>
<dbReference type="EC" id="1.18.1.3" evidence="4"/>
<dbReference type="EMBL" id="M95045">
    <property type="protein sequence ID" value="AAA26004.1"/>
    <property type="molecule type" value="Genomic_DNA"/>
</dbReference>
<dbReference type="EMBL" id="AY552601">
    <property type="protein sequence ID" value="AAS66665.1"/>
    <property type="molecule type" value="Genomic_DNA"/>
</dbReference>
<dbReference type="PIR" id="A47016">
    <property type="entry name" value="A47016"/>
</dbReference>
<dbReference type="PDB" id="4WQM">
    <property type="method" value="X-ray"/>
    <property type="resolution" value="1.62 A"/>
    <property type="chains" value="A=2-326"/>
</dbReference>
<dbReference type="PDBsum" id="4WQM"/>
<dbReference type="SMR" id="Q03304"/>
<dbReference type="KEGG" id="ag:AAA26004"/>
<dbReference type="BioCyc" id="MetaCyc:MONOMER-2501"/>
<dbReference type="BRENDA" id="1.14.13.236">
    <property type="organism ID" value="31258"/>
</dbReference>
<dbReference type="UniPathway" id="UPA00273"/>
<dbReference type="EvolutionaryTrace" id="Q03304"/>
<dbReference type="GO" id="GO:0051537">
    <property type="term" value="F:2 iron, 2 sulfur cluster binding"/>
    <property type="evidence" value="ECO:0007669"/>
    <property type="project" value="UniProtKB-KW"/>
</dbReference>
<dbReference type="GO" id="GO:0008860">
    <property type="term" value="F:ferredoxin-NAD+ reductase activity"/>
    <property type="evidence" value="ECO:0007669"/>
    <property type="project" value="UniProtKB-EC"/>
</dbReference>
<dbReference type="GO" id="GO:0046872">
    <property type="term" value="F:metal ion binding"/>
    <property type="evidence" value="ECO:0007669"/>
    <property type="project" value="UniProtKB-KW"/>
</dbReference>
<dbReference type="GO" id="GO:0042203">
    <property type="term" value="P:toluene catabolic process"/>
    <property type="evidence" value="ECO:0007669"/>
    <property type="project" value="UniProtKB-UniPathway"/>
</dbReference>
<dbReference type="CDD" id="cd00207">
    <property type="entry name" value="fer2"/>
    <property type="match status" value="1"/>
</dbReference>
<dbReference type="CDD" id="cd06190">
    <property type="entry name" value="T4MO_e_transfer_like"/>
    <property type="match status" value="1"/>
</dbReference>
<dbReference type="Gene3D" id="3.10.20.30">
    <property type="match status" value="1"/>
</dbReference>
<dbReference type="Gene3D" id="3.40.50.80">
    <property type="entry name" value="Nucleotide-binding domain of ferredoxin-NADP reductase (FNR) module"/>
    <property type="match status" value="1"/>
</dbReference>
<dbReference type="Gene3D" id="2.40.30.10">
    <property type="entry name" value="Translation factors"/>
    <property type="match status" value="1"/>
</dbReference>
<dbReference type="InterPro" id="IPR036010">
    <property type="entry name" value="2Fe-2S_ferredoxin-like_sf"/>
</dbReference>
<dbReference type="InterPro" id="IPR001041">
    <property type="entry name" value="2Fe-2S_ferredoxin-type"/>
</dbReference>
<dbReference type="InterPro" id="IPR006058">
    <property type="entry name" value="2Fe2S_fd_BS"/>
</dbReference>
<dbReference type="InterPro" id="IPR012675">
    <property type="entry name" value="Beta-grasp_dom_sf"/>
</dbReference>
<dbReference type="InterPro" id="IPR008333">
    <property type="entry name" value="Cbr1-like_FAD-bd_dom"/>
</dbReference>
<dbReference type="InterPro" id="IPR017927">
    <property type="entry name" value="FAD-bd_FR_type"/>
</dbReference>
<dbReference type="InterPro" id="IPR001709">
    <property type="entry name" value="Flavoprot_Pyr_Nucl_cyt_Rdtase"/>
</dbReference>
<dbReference type="InterPro" id="IPR039261">
    <property type="entry name" value="FNR_nucleotide-bd"/>
</dbReference>
<dbReference type="InterPro" id="IPR050415">
    <property type="entry name" value="MRET"/>
</dbReference>
<dbReference type="InterPro" id="IPR001433">
    <property type="entry name" value="OxRdtase_FAD/NAD-bd"/>
</dbReference>
<dbReference type="InterPro" id="IPR017938">
    <property type="entry name" value="Riboflavin_synthase-like_b-brl"/>
</dbReference>
<dbReference type="PANTHER" id="PTHR47354">
    <property type="entry name" value="NADH OXIDOREDUCTASE HCR"/>
    <property type="match status" value="1"/>
</dbReference>
<dbReference type="PANTHER" id="PTHR47354:SF5">
    <property type="entry name" value="PROTEIN RFBI"/>
    <property type="match status" value="1"/>
</dbReference>
<dbReference type="Pfam" id="PF00970">
    <property type="entry name" value="FAD_binding_6"/>
    <property type="match status" value="1"/>
</dbReference>
<dbReference type="Pfam" id="PF00111">
    <property type="entry name" value="Fer2"/>
    <property type="match status" value="1"/>
</dbReference>
<dbReference type="Pfam" id="PF00175">
    <property type="entry name" value="NAD_binding_1"/>
    <property type="match status" value="1"/>
</dbReference>
<dbReference type="PRINTS" id="PR00371">
    <property type="entry name" value="FPNCR"/>
</dbReference>
<dbReference type="PRINTS" id="PR00410">
    <property type="entry name" value="PHEHYDRXLASE"/>
</dbReference>
<dbReference type="SUPFAM" id="SSF54292">
    <property type="entry name" value="2Fe-2S ferredoxin-like"/>
    <property type="match status" value="1"/>
</dbReference>
<dbReference type="SUPFAM" id="SSF52343">
    <property type="entry name" value="Ferredoxin reductase-like, C-terminal NADP-linked domain"/>
    <property type="match status" value="1"/>
</dbReference>
<dbReference type="SUPFAM" id="SSF63380">
    <property type="entry name" value="Riboflavin synthase domain-like"/>
    <property type="match status" value="1"/>
</dbReference>
<dbReference type="PROSITE" id="PS00197">
    <property type="entry name" value="2FE2S_FER_1"/>
    <property type="match status" value="1"/>
</dbReference>
<dbReference type="PROSITE" id="PS51085">
    <property type="entry name" value="2FE2S_FER_2"/>
    <property type="match status" value="1"/>
</dbReference>
<dbReference type="PROSITE" id="PS51384">
    <property type="entry name" value="FAD_FR"/>
    <property type="match status" value="1"/>
</dbReference>
<feature type="chain" id="PRO_0000167658" description="Toluene-4-monooxygenase system, ferredoxin--NAD(+) reductase component">
    <location>
        <begin position="1"/>
        <end position="326"/>
    </location>
</feature>
<feature type="domain" description="2Fe-2S ferredoxin-type" evidence="1">
    <location>
        <begin position="1"/>
        <end position="92"/>
    </location>
</feature>
<feature type="domain" description="FAD-binding FR-type" evidence="2">
    <location>
        <begin position="100"/>
        <end position="195"/>
    </location>
</feature>
<feature type="region of interest" description="Ferredoxin-reductase">
    <location>
        <begin position="95"/>
        <end position="326"/>
    </location>
</feature>
<feature type="binding site" evidence="5 12">
    <location>
        <position position="36"/>
    </location>
    <ligand>
        <name>[2Fe-2S] cluster</name>
        <dbReference type="ChEBI" id="CHEBI:190135"/>
    </ligand>
</feature>
<feature type="binding site" evidence="5 12">
    <location>
        <position position="41"/>
    </location>
    <ligand>
        <name>[2Fe-2S] cluster</name>
        <dbReference type="ChEBI" id="CHEBI:190135"/>
    </ligand>
</feature>
<feature type="binding site" evidence="5 12">
    <location>
        <position position="44"/>
    </location>
    <ligand>
        <name>[2Fe-2S] cluster</name>
        <dbReference type="ChEBI" id="CHEBI:190135"/>
    </ligand>
</feature>
<feature type="binding site" evidence="5 12">
    <location>
        <position position="76"/>
    </location>
    <ligand>
        <name>[2Fe-2S] cluster</name>
        <dbReference type="ChEBI" id="CHEBI:190135"/>
    </ligand>
</feature>
<feature type="binding site" evidence="5 12">
    <location>
        <begin position="146"/>
        <end position="149"/>
    </location>
    <ligand>
        <name>FAD</name>
        <dbReference type="ChEBI" id="CHEBI:57692"/>
    </ligand>
</feature>
<feature type="binding site" evidence="5 12">
    <location>
        <begin position="162"/>
        <end position="164"/>
    </location>
    <ligand>
        <name>FAD</name>
        <dbReference type="ChEBI" id="CHEBI:57692"/>
    </ligand>
</feature>
<feature type="binding site" evidence="5 12">
    <location>
        <begin position="170"/>
        <end position="172"/>
    </location>
    <ligand>
        <name>FAD</name>
        <dbReference type="ChEBI" id="CHEBI:57692"/>
    </ligand>
</feature>
<feature type="strand" evidence="13">
    <location>
        <begin position="2"/>
        <end position="5"/>
    </location>
</feature>
<feature type="strand" evidence="13">
    <location>
        <begin position="9"/>
        <end position="11"/>
    </location>
</feature>
<feature type="strand" evidence="13">
    <location>
        <begin position="13"/>
        <end position="15"/>
    </location>
</feature>
<feature type="helix" evidence="13">
    <location>
        <begin position="21"/>
        <end position="27"/>
    </location>
</feature>
<feature type="strand" evidence="13">
    <location>
        <begin position="37"/>
        <end position="41"/>
    </location>
</feature>
<feature type="strand" evidence="13">
    <location>
        <begin position="45"/>
        <end position="51"/>
    </location>
</feature>
<feature type="strand" evidence="13">
    <location>
        <begin position="53"/>
        <end position="56"/>
    </location>
</feature>
<feature type="helix" evidence="13">
    <location>
        <begin position="65"/>
        <end position="69"/>
    </location>
</feature>
<feature type="strand" evidence="13">
    <location>
        <begin position="72"/>
        <end position="74"/>
    </location>
</feature>
<feature type="helix" evidence="13">
    <location>
        <begin position="75"/>
        <end position="77"/>
    </location>
</feature>
<feature type="strand" evidence="13">
    <location>
        <begin position="78"/>
        <end position="82"/>
    </location>
</feature>
<feature type="strand" evidence="13">
    <location>
        <begin position="84"/>
        <end position="88"/>
    </location>
</feature>
<feature type="strand" evidence="13">
    <location>
        <begin position="101"/>
        <end position="123"/>
    </location>
</feature>
<feature type="strand" evidence="13">
    <location>
        <begin position="135"/>
        <end position="140"/>
    </location>
</feature>
<feature type="turn" evidence="13">
    <location>
        <begin position="141"/>
        <end position="143"/>
    </location>
</feature>
<feature type="strand" evidence="13">
    <location>
        <begin position="144"/>
        <end position="149"/>
    </location>
</feature>
<feature type="strand" evidence="13">
    <location>
        <begin position="158"/>
        <end position="164"/>
    </location>
</feature>
<feature type="helix" evidence="13">
    <location>
        <begin position="170"/>
        <end position="177"/>
    </location>
</feature>
<feature type="strand" evidence="13">
    <location>
        <begin position="181"/>
        <end position="189"/>
    </location>
</feature>
<feature type="strand" evidence="13">
    <location>
        <begin position="202"/>
        <end position="207"/>
    </location>
</feature>
<feature type="helix" evidence="13">
    <location>
        <begin position="208"/>
        <end position="210"/>
    </location>
</feature>
<feature type="helix" evidence="13">
    <location>
        <begin position="211"/>
        <end position="223"/>
    </location>
</feature>
<feature type="strand" evidence="13">
    <location>
        <begin position="230"/>
        <end position="237"/>
    </location>
</feature>
<feature type="helix" evidence="13">
    <location>
        <begin position="239"/>
        <end position="248"/>
    </location>
</feature>
<feature type="strand" evidence="13">
    <location>
        <begin position="255"/>
        <end position="261"/>
    </location>
</feature>
<feature type="helix" evidence="13">
    <location>
        <begin position="277"/>
        <end position="280"/>
    </location>
</feature>
<feature type="helix" evidence="13">
    <location>
        <begin position="281"/>
        <end position="288"/>
    </location>
</feature>
<feature type="strand" evidence="13">
    <location>
        <begin position="292"/>
        <end position="297"/>
    </location>
</feature>
<feature type="helix" evidence="13">
    <location>
        <begin position="299"/>
        <end position="310"/>
    </location>
</feature>
<feature type="helix" evidence="13">
    <location>
        <begin position="317"/>
        <end position="319"/>
    </location>
</feature>
<feature type="strand" evidence="13">
    <location>
        <begin position="320"/>
        <end position="324"/>
    </location>
</feature>
<sequence>MFNIQSDDLLHHFEADSNDTLLSAALRAELVFPYECNSGGCGACKIELLEGEVSNLWPDAPGLAARELRKNRFLACQCKPLSDLKIKVINRAEGRASHPPKRFSTRVVSKRFLSDEMFELRLEAEQKVVFSPGQYFMVDVPELGTRAYSAANPVDGNTLTLIVKAVPNGKVSCALANETIETLQLDGPYGLSVLKTADETQSVFIAGGSGIAPMVSMVNTLIAQGYEKPITVFYGSRLEAELEAAETLFGWKENLKLINVSSSVVGNSEKKYPTGYVHEIIPEYMEGLLGAEFYLCGPPQMINSVQKLLMIENKVPFEAIHFDRFF</sequence>
<comment type="function">
    <text evidence="3 4 9">Reductase component of the toluene-4-monooxygenase multicomponent enzyme system which catalyzes the O2- and NADH-dependent hydroxylation of toluene to form p-cresol (PubMed:15240250, PubMed:17964805). Ferredoxin reductase catalyzes the transfer of electrons from NADH to ferredoxin (TmoC) (PubMed:17964805).</text>
</comment>
<comment type="catalytic activity">
    <reaction evidence="4">
        <text>2 reduced [2Fe-2S]-[ferredoxin] + NAD(+) + H(+) = 2 oxidized [2Fe-2S]-[ferredoxin] + NADH</text>
        <dbReference type="Rhea" id="RHEA:16521"/>
        <dbReference type="Rhea" id="RHEA-COMP:10000"/>
        <dbReference type="Rhea" id="RHEA-COMP:10001"/>
        <dbReference type="ChEBI" id="CHEBI:15378"/>
        <dbReference type="ChEBI" id="CHEBI:33737"/>
        <dbReference type="ChEBI" id="CHEBI:33738"/>
        <dbReference type="ChEBI" id="CHEBI:57540"/>
        <dbReference type="ChEBI" id="CHEBI:57945"/>
        <dbReference type="EC" id="1.18.1.3"/>
    </reaction>
</comment>
<comment type="cofactor">
    <cofactor evidence="4 5">
        <name>FAD</name>
        <dbReference type="ChEBI" id="CHEBI:57692"/>
    </cofactor>
    <text evidence="4">Binds 1 FAD per subunit.</text>
</comment>
<comment type="cofactor">
    <cofactor evidence="4 5">
        <name>[2Fe-2S] cluster</name>
        <dbReference type="ChEBI" id="CHEBI:190135"/>
    </cofactor>
    <text evidence="4 5">Binds 1 2Fe-2S cluster.</text>
</comment>
<comment type="pathway">
    <text evidence="10">Xenobiotic degradation; toluene degradation.</text>
</comment>
<comment type="subunit">
    <text evidence="5">Monomer (PubMed:26309236). The alkene monooxygenase multicomponent enzyme system is composed of an electron transfer component and a monooxygenase component interacting with the effector protein TmoD. The electron transfer component is composed of a ferredoxin reductase (TmoF) and a ferredoxin (TmoC), and the monooxygenase component is formed by a heterohexamer (dimer of heterotrimers) of two alpha subunits (TmoA), two beta subunits (TmoE) and two gamma subunits (TmoB).</text>
</comment>
<comment type="similarity">
    <text evidence="8">Belongs to the bacterial ring-hydroxylating dioxygenase ferredoxin reductase family.</text>
</comment>
<keyword id="KW-0001">2Fe-2S</keyword>
<keyword id="KW-0002">3D-structure</keyword>
<keyword id="KW-0058">Aromatic hydrocarbons catabolism</keyword>
<keyword id="KW-0903">Direct protein sequencing</keyword>
<keyword id="KW-0274">FAD</keyword>
<keyword id="KW-0285">Flavoprotein</keyword>
<keyword id="KW-0408">Iron</keyword>
<keyword id="KW-0411">Iron-sulfur</keyword>
<keyword id="KW-0479">Metal-binding</keyword>
<keyword id="KW-0520">NAD</keyword>
<keyword id="KW-0560">Oxidoreductase</keyword>
<proteinExistence type="evidence at protein level"/>
<evidence type="ECO:0000255" key="1">
    <source>
        <dbReference type="PROSITE-ProRule" id="PRU00465"/>
    </source>
</evidence>
<evidence type="ECO:0000255" key="2">
    <source>
        <dbReference type="PROSITE-ProRule" id="PRU00716"/>
    </source>
</evidence>
<evidence type="ECO:0000269" key="3">
    <source>
    </source>
</evidence>
<evidence type="ECO:0000269" key="4">
    <source>
    </source>
</evidence>
<evidence type="ECO:0000269" key="5">
    <source>
    </source>
</evidence>
<evidence type="ECO:0000303" key="6">
    <source>
    </source>
</evidence>
<evidence type="ECO:0000303" key="7">
    <source>
    </source>
</evidence>
<evidence type="ECO:0000305" key="8"/>
<evidence type="ECO:0000305" key="9">
    <source>
    </source>
</evidence>
<evidence type="ECO:0000305" key="10">
    <source>
    </source>
</evidence>
<evidence type="ECO:0000312" key="11">
    <source>
        <dbReference type="EMBL" id="AAS66665.1"/>
    </source>
</evidence>
<evidence type="ECO:0007744" key="12">
    <source>
        <dbReference type="PDB" id="4WQM"/>
    </source>
</evidence>
<evidence type="ECO:0007829" key="13">
    <source>
        <dbReference type="PDB" id="4WQM"/>
    </source>
</evidence>
<name>TMOF_ECTME</name>